<name>Y6963_RHOBA</name>
<comment type="cofactor">
    <cofactor evidence="1">
        <name>[4Fe-4S] cluster</name>
        <dbReference type="ChEBI" id="CHEBI:49883"/>
    </cofactor>
    <text evidence="1">Binds 1 [4Fe-4S] cluster. The cluster is coordinated with 3 cysteines and an exchangeable S-adenosyl-L-methionine.</text>
</comment>
<comment type="subcellular location">
    <subcellularLocation>
        <location evidence="4">Cytoplasm</location>
    </subcellularLocation>
</comment>
<comment type="similarity">
    <text evidence="4">Belongs to the radical SAM superfamily. RlmN family.</text>
</comment>
<accession>Q7UPG1</accession>
<evidence type="ECO:0000250" key="1"/>
<evidence type="ECO:0000255" key="2"/>
<evidence type="ECO:0000255" key="3">
    <source>
        <dbReference type="PROSITE-ProRule" id="PRU01266"/>
    </source>
</evidence>
<evidence type="ECO:0000305" key="4"/>
<sequence>MTAAPASVRLFQTHEMEALRRDRRLDPQVFRKLRNDLLKKFESDEAVLEKYPVAEAIELHSLKLYQRMDSEIDGATKLLFETESGMLIESVILRIATGRTTLCVSSQIGCAAACDFCATGKMGIAKNLATEEILDQVVQAGQILRGEDRRLSNIVFMGMGEPLHNEVNVTEAIELLTAPDHFARSPSTVLVSTVGVPAGMLRLAKRFPNLNLALSLHSADQTTREKIIPLGKKASLAQLHDAIHEIQTIQDREFMIEYLMLRDVNDSAKDADRLIDWIGDLRVHVNLIPYNTIEASPHLHASSRPVIESFADILKASGLKTTVRYSLGNDIEAACGQLIRQENRQRAMQARRTESESDSHVGFLDVRQVVDGLESQKNK</sequence>
<proteinExistence type="inferred from homology"/>
<keyword id="KW-0004">4Fe-4S</keyword>
<keyword id="KW-0963">Cytoplasm</keyword>
<keyword id="KW-1015">Disulfide bond</keyword>
<keyword id="KW-0408">Iron</keyword>
<keyword id="KW-0411">Iron-sulfur</keyword>
<keyword id="KW-0479">Metal-binding</keyword>
<keyword id="KW-0489">Methyltransferase</keyword>
<keyword id="KW-1185">Reference proteome</keyword>
<keyword id="KW-0949">S-adenosyl-L-methionine</keyword>
<keyword id="KW-0808">Transferase</keyword>
<organism>
    <name type="scientific">Rhodopirellula baltica (strain DSM 10527 / NCIMB 13988 / SH1)</name>
    <dbReference type="NCBI Taxonomy" id="243090"/>
    <lineage>
        <taxon>Bacteria</taxon>
        <taxon>Pseudomonadati</taxon>
        <taxon>Planctomycetota</taxon>
        <taxon>Planctomycetia</taxon>
        <taxon>Pirellulales</taxon>
        <taxon>Pirellulaceae</taxon>
        <taxon>Rhodopirellula</taxon>
    </lineage>
</organism>
<dbReference type="EC" id="2.1.1.-"/>
<dbReference type="EMBL" id="BX294145">
    <property type="protein sequence ID" value="CAD75101.1"/>
    <property type="molecule type" value="Genomic_DNA"/>
</dbReference>
<dbReference type="RefSeq" id="NP_867554.1">
    <property type="nucleotide sequence ID" value="NC_005027.1"/>
</dbReference>
<dbReference type="RefSeq" id="WP_011121180.1">
    <property type="nucleotide sequence ID" value="NC_005027.1"/>
</dbReference>
<dbReference type="SMR" id="Q7UPG1"/>
<dbReference type="STRING" id="243090.RB6963"/>
<dbReference type="EnsemblBacteria" id="CAD75101">
    <property type="protein sequence ID" value="CAD75101"/>
    <property type="gene ID" value="RB6963"/>
</dbReference>
<dbReference type="KEGG" id="rba:RB6963"/>
<dbReference type="PATRIC" id="fig|243090.15.peg.3371"/>
<dbReference type="eggNOG" id="COG0820">
    <property type="taxonomic scope" value="Bacteria"/>
</dbReference>
<dbReference type="HOGENOM" id="CLU_029101_0_2_0"/>
<dbReference type="InParanoid" id="Q7UPG1"/>
<dbReference type="OrthoDB" id="9793973at2"/>
<dbReference type="Proteomes" id="UP000001025">
    <property type="component" value="Chromosome"/>
</dbReference>
<dbReference type="GO" id="GO:0005737">
    <property type="term" value="C:cytoplasm"/>
    <property type="evidence" value="ECO:0007669"/>
    <property type="project" value="UniProtKB-SubCell"/>
</dbReference>
<dbReference type="GO" id="GO:0051539">
    <property type="term" value="F:4 iron, 4 sulfur cluster binding"/>
    <property type="evidence" value="ECO:0007669"/>
    <property type="project" value="UniProtKB-KW"/>
</dbReference>
<dbReference type="GO" id="GO:0046872">
    <property type="term" value="F:metal ion binding"/>
    <property type="evidence" value="ECO:0007669"/>
    <property type="project" value="UniProtKB-KW"/>
</dbReference>
<dbReference type="GO" id="GO:0008173">
    <property type="term" value="F:RNA methyltransferase activity"/>
    <property type="evidence" value="ECO:0007669"/>
    <property type="project" value="InterPro"/>
</dbReference>
<dbReference type="GO" id="GO:0070475">
    <property type="term" value="P:rRNA base methylation"/>
    <property type="evidence" value="ECO:0000318"/>
    <property type="project" value="GO_Central"/>
</dbReference>
<dbReference type="GO" id="GO:0030488">
    <property type="term" value="P:tRNA methylation"/>
    <property type="evidence" value="ECO:0000318"/>
    <property type="project" value="GO_Central"/>
</dbReference>
<dbReference type="CDD" id="cd01335">
    <property type="entry name" value="Radical_SAM"/>
    <property type="match status" value="1"/>
</dbReference>
<dbReference type="FunFam" id="3.20.20.70:FF:000164">
    <property type="entry name" value="23S rRNA methyltransferase"/>
    <property type="match status" value="1"/>
</dbReference>
<dbReference type="Gene3D" id="3.20.20.70">
    <property type="entry name" value="Aldolase class I"/>
    <property type="match status" value="1"/>
</dbReference>
<dbReference type="InterPro" id="IPR013785">
    <property type="entry name" value="Aldolase_TIM"/>
</dbReference>
<dbReference type="InterPro" id="IPR040072">
    <property type="entry name" value="Methyltransferase_A"/>
</dbReference>
<dbReference type="InterPro" id="IPR004383">
    <property type="entry name" value="rRNA_lsu_MTrfase_RlmN/Cfr"/>
</dbReference>
<dbReference type="InterPro" id="IPR007197">
    <property type="entry name" value="rSAM"/>
</dbReference>
<dbReference type="PANTHER" id="PTHR30544">
    <property type="entry name" value="23S RRNA METHYLTRANSFERASE"/>
    <property type="match status" value="1"/>
</dbReference>
<dbReference type="PANTHER" id="PTHR30544:SF5">
    <property type="entry name" value="RADICAL SAM CORE DOMAIN-CONTAINING PROTEIN"/>
    <property type="match status" value="1"/>
</dbReference>
<dbReference type="Pfam" id="PF04055">
    <property type="entry name" value="Radical_SAM"/>
    <property type="match status" value="1"/>
</dbReference>
<dbReference type="SFLD" id="SFLDF00275">
    <property type="entry name" value="adenosine_C2_methyltransferase"/>
    <property type="match status" value="1"/>
</dbReference>
<dbReference type="SFLD" id="SFLDS00029">
    <property type="entry name" value="Radical_SAM"/>
    <property type="match status" value="1"/>
</dbReference>
<dbReference type="SUPFAM" id="SSF102114">
    <property type="entry name" value="Radical SAM enzymes"/>
    <property type="match status" value="1"/>
</dbReference>
<dbReference type="PROSITE" id="PS51918">
    <property type="entry name" value="RADICAL_SAM"/>
    <property type="match status" value="1"/>
</dbReference>
<reference key="1">
    <citation type="journal article" date="2003" name="Proc. Natl. Acad. Sci. U.S.A.">
        <title>Complete genome sequence of the marine planctomycete Pirellula sp. strain 1.</title>
        <authorList>
            <person name="Gloeckner F.O."/>
            <person name="Kube M."/>
            <person name="Bauer M."/>
            <person name="Teeling H."/>
            <person name="Lombardot T."/>
            <person name="Ludwig W."/>
            <person name="Gade D."/>
            <person name="Beck A."/>
            <person name="Borzym K."/>
            <person name="Heitmann K."/>
            <person name="Rabus R."/>
            <person name="Schlesner H."/>
            <person name="Amann R."/>
            <person name="Reinhardt R."/>
        </authorList>
    </citation>
    <scope>NUCLEOTIDE SEQUENCE [LARGE SCALE GENOMIC DNA]</scope>
    <source>
        <strain>DSM 10527 / NCIMB 13988 / SH1</strain>
    </source>
</reference>
<feature type="chain" id="PRO_0000350366" description="Probable RNA methyltransferase RB6963">
    <location>
        <begin position="1"/>
        <end position="379"/>
    </location>
</feature>
<feature type="domain" description="Radical SAM core" evidence="3">
    <location>
        <begin position="96"/>
        <end position="332"/>
    </location>
</feature>
<feature type="active site" description="Proton acceptor" evidence="2">
    <location>
        <position position="89"/>
    </location>
</feature>
<feature type="active site" description="S-methylcysteine intermediate" evidence="1">
    <location>
        <position position="335"/>
    </location>
</feature>
<feature type="binding site" evidence="1">
    <location>
        <position position="110"/>
    </location>
    <ligand>
        <name>[4Fe-4S] cluster</name>
        <dbReference type="ChEBI" id="CHEBI:49883"/>
        <note>4Fe-4S-S-AdoMet</note>
    </ligand>
</feature>
<feature type="binding site" evidence="1">
    <location>
        <position position="114"/>
    </location>
    <ligand>
        <name>[4Fe-4S] cluster</name>
        <dbReference type="ChEBI" id="CHEBI:49883"/>
        <note>4Fe-4S-S-AdoMet</note>
    </ligand>
</feature>
<feature type="binding site" evidence="1">
    <location>
        <position position="117"/>
    </location>
    <ligand>
        <name>[4Fe-4S] cluster</name>
        <dbReference type="ChEBI" id="CHEBI:49883"/>
        <note>4Fe-4S-S-AdoMet</note>
    </ligand>
</feature>
<feature type="binding site" evidence="1">
    <location>
        <begin position="160"/>
        <end position="161"/>
    </location>
    <ligand>
        <name>S-adenosyl-L-methionine</name>
        <dbReference type="ChEBI" id="CHEBI:59789"/>
    </ligand>
</feature>
<feature type="binding site" evidence="1">
    <location>
        <position position="192"/>
    </location>
    <ligand>
        <name>S-adenosyl-L-methionine</name>
        <dbReference type="ChEBI" id="CHEBI:59789"/>
    </ligand>
</feature>
<feature type="binding site" evidence="1">
    <location>
        <begin position="215"/>
        <end position="217"/>
    </location>
    <ligand>
        <name>S-adenosyl-L-methionine</name>
        <dbReference type="ChEBI" id="CHEBI:59789"/>
    </ligand>
</feature>
<feature type="binding site" evidence="1">
    <location>
        <position position="291"/>
    </location>
    <ligand>
        <name>S-adenosyl-L-methionine</name>
        <dbReference type="ChEBI" id="CHEBI:59789"/>
    </ligand>
</feature>
<feature type="disulfide bond" description="(transient)" evidence="1">
    <location>
        <begin position="103"/>
        <end position="335"/>
    </location>
</feature>
<gene>
    <name type="ordered locus">RB6963</name>
</gene>
<protein>
    <recommendedName>
        <fullName>Probable RNA methyltransferase RB6963</fullName>
        <ecNumber>2.1.1.-</ecNumber>
    </recommendedName>
</protein>